<dbReference type="EC" id="3.6.5.-" evidence="2"/>
<dbReference type="EMBL" id="M60164">
    <property type="protein sequence ID" value="AAA52585.1"/>
    <property type="molecule type" value="Genomic_DNA"/>
</dbReference>
<dbReference type="EMBL" id="M60156">
    <property type="protein sequence ID" value="AAA52585.1"/>
    <property type="status" value="JOINED"/>
    <property type="molecule type" value="Genomic_DNA"/>
</dbReference>
<dbReference type="EMBL" id="M60157">
    <property type="protein sequence ID" value="AAA52585.1"/>
    <property type="status" value="JOINED"/>
    <property type="molecule type" value="Genomic_DNA"/>
</dbReference>
<dbReference type="EMBL" id="M60158">
    <property type="protein sequence ID" value="AAA52585.1"/>
    <property type="status" value="JOINED"/>
    <property type="molecule type" value="Genomic_DNA"/>
</dbReference>
<dbReference type="EMBL" id="M60159">
    <property type="protein sequence ID" value="AAA52585.1"/>
    <property type="status" value="JOINED"/>
    <property type="molecule type" value="Genomic_DNA"/>
</dbReference>
<dbReference type="EMBL" id="M60160">
    <property type="protein sequence ID" value="AAA52585.1"/>
    <property type="status" value="JOINED"/>
    <property type="molecule type" value="Genomic_DNA"/>
</dbReference>
<dbReference type="EMBL" id="M60163">
    <property type="protein sequence ID" value="AAA52585.1"/>
    <property type="status" value="JOINED"/>
    <property type="molecule type" value="Genomic_DNA"/>
</dbReference>
<dbReference type="EMBL" id="M60162">
    <property type="protein sequence ID" value="AAA52586.1"/>
    <property type="molecule type" value="Genomic_DNA"/>
</dbReference>
<dbReference type="EMBL" id="M60156">
    <property type="protein sequence ID" value="AAA52586.1"/>
    <property type="status" value="JOINED"/>
    <property type="molecule type" value="Genomic_DNA"/>
</dbReference>
<dbReference type="EMBL" id="M60157">
    <property type="protein sequence ID" value="AAA52586.1"/>
    <property type="status" value="JOINED"/>
    <property type="molecule type" value="Genomic_DNA"/>
</dbReference>
<dbReference type="EMBL" id="M60158">
    <property type="protein sequence ID" value="AAA52586.1"/>
    <property type="status" value="JOINED"/>
    <property type="molecule type" value="Genomic_DNA"/>
</dbReference>
<dbReference type="EMBL" id="M60159">
    <property type="protein sequence ID" value="AAA52586.1"/>
    <property type="status" value="JOINED"/>
    <property type="molecule type" value="Genomic_DNA"/>
</dbReference>
<dbReference type="EMBL" id="M60160">
    <property type="protein sequence ID" value="AAA52586.1"/>
    <property type="status" value="JOINED"/>
    <property type="molecule type" value="Genomic_DNA"/>
</dbReference>
<dbReference type="EMBL" id="M60161">
    <property type="protein sequence ID" value="AAA52586.1"/>
    <property type="status" value="JOINED"/>
    <property type="molecule type" value="Genomic_DNA"/>
</dbReference>
<dbReference type="EMBL" id="M19182">
    <property type="protein sequence ID" value="AAA52584.1"/>
    <property type="molecule type" value="mRNA"/>
</dbReference>
<dbReference type="EMBL" id="M19184">
    <property type="protein sequence ID" value="AAA52584.1"/>
    <property type="status" value="JOINED"/>
    <property type="molecule type" value="Genomic_DNA"/>
</dbReference>
<dbReference type="EMBL" id="AF493894">
    <property type="protein sequence ID" value="AAM12608.1"/>
    <property type="molecule type" value="mRNA"/>
</dbReference>
<dbReference type="EMBL" id="AF493895">
    <property type="protein sequence ID" value="AAM12609.1"/>
    <property type="molecule type" value="mRNA"/>
</dbReference>
<dbReference type="EMBL" id="Y18213">
    <property type="protein sequence ID" value="CAB46639.1"/>
    <property type="molecule type" value="mRNA"/>
</dbReference>
<dbReference type="CCDS" id="CCDS10756.1">
    <molecule id="P09471-1"/>
</dbReference>
<dbReference type="CCDS" id="CCDS10757.1">
    <molecule id="P09471-2"/>
</dbReference>
<dbReference type="PIR" id="A40436">
    <property type="entry name" value="RGHUO1"/>
</dbReference>
<dbReference type="PIR" id="B40436">
    <property type="entry name" value="RGHUO2"/>
</dbReference>
<dbReference type="RefSeq" id="NP_066268.1">
    <molecule id="P09471-1"/>
    <property type="nucleotide sequence ID" value="NM_020988.3"/>
</dbReference>
<dbReference type="RefSeq" id="NP_620073.2">
    <molecule id="P09471-2"/>
    <property type="nucleotide sequence ID" value="NM_138736.3"/>
</dbReference>
<dbReference type="PDB" id="6FUF">
    <property type="method" value="X-ray"/>
    <property type="resolution" value="3.12 A"/>
    <property type="chains" value="B=18-354"/>
</dbReference>
<dbReference type="PDB" id="6G79">
    <property type="method" value="EM"/>
    <property type="resolution" value="3.78 A"/>
    <property type="chains" value="A=4-57, A=276-354"/>
</dbReference>
<dbReference type="PDB" id="6K41">
    <property type="method" value="EM"/>
    <property type="resolution" value="2.90 A"/>
    <property type="chains" value="A=1-354"/>
</dbReference>
<dbReference type="PDB" id="6OIK">
    <property type="method" value="EM"/>
    <property type="resolution" value="3.60 A"/>
    <property type="chains" value="A=1-354"/>
</dbReference>
<dbReference type="PDB" id="6WWZ">
    <property type="method" value="EM"/>
    <property type="resolution" value="3.34 A"/>
    <property type="chains" value="A=4-57, A=182-354"/>
</dbReference>
<dbReference type="PDB" id="7D76">
    <property type="method" value="EM"/>
    <property type="resolution" value="3.10 A"/>
    <property type="chains" value="A=4-354"/>
</dbReference>
<dbReference type="PDB" id="7D77">
    <property type="method" value="EM"/>
    <property type="resolution" value="2.90 A"/>
    <property type="chains" value="A=4-354"/>
</dbReference>
<dbReference type="PDB" id="7EJ0">
    <property type="method" value="EM"/>
    <property type="resolution" value="3.20 A"/>
    <property type="chains" value="A=1-354"/>
</dbReference>
<dbReference type="PDB" id="7EJ8">
    <property type="method" value="EM"/>
    <property type="resolution" value="3.00 A"/>
    <property type="chains" value="A=1-354"/>
</dbReference>
<dbReference type="PDB" id="7EJA">
    <property type="method" value="EM"/>
    <property type="resolution" value="3.60 A"/>
    <property type="chains" value="A=1-354"/>
</dbReference>
<dbReference type="PDB" id="7EJK">
    <property type="method" value="EM"/>
    <property type="resolution" value="3.40 A"/>
    <property type="chains" value="A=1-354"/>
</dbReference>
<dbReference type="PDB" id="7QVM">
    <property type="method" value="EM"/>
    <property type="resolution" value="3.25 A"/>
    <property type="chains" value="A=1-57, A=182-353"/>
</dbReference>
<dbReference type="PDB" id="7T8X">
    <property type="method" value="EM"/>
    <property type="resolution" value="3.21 A"/>
    <property type="chains" value="B=1-354"/>
</dbReference>
<dbReference type="PDB" id="7T90">
    <property type="method" value="EM"/>
    <property type="resolution" value="3.32 A"/>
    <property type="chains" value="B=1-354"/>
</dbReference>
<dbReference type="PDB" id="7T94">
    <property type="method" value="EM"/>
    <property type="resolution" value="3.16 A"/>
    <property type="chains" value="B=1-354"/>
</dbReference>
<dbReference type="PDB" id="7T96">
    <property type="method" value="EM"/>
    <property type="resolution" value="3.22 A"/>
    <property type="chains" value="B=1-354"/>
</dbReference>
<dbReference type="PDB" id="7W2Z">
    <property type="method" value="EM"/>
    <property type="resolution" value="2.80 A"/>
    <property type="chains" value="A=182-354"/>
</dbReference>
<dbReference type="PDB" id="7W6P">
    <property type="method" value="EM"/>
    <property type="resolution" value="3.47 A"/>
    <property type="chains" value="A=1-354"/>
</dbReference>
<dbReference type="PDB" id="7W7E">
    <property type="method" value="EM"/>
    <property type="resolution" value="3.40 A"/>
    <property type="chains" value="A=1-354"/>
</dbReference>
<dbReference type="PDB" id="7XJJ">
    <property type="method" value="EM"/>
    <property type="resolution" value="3.30 A"/>
    <property type="chains" value="A=1-57, A=182-354"/>
</dbReference>
<dbReference type="PDB" id="7Y24">
    <property type="method" value="EM"/>
    <property type="resolution" value="3.25 A"/>
    <property type="chains" value="A=5-57, A=182-354"/>
</dbReference>
<dbReference type="PDB" id="8DZQ">
    <property type="method" value="EM"/>
    <property type="resolution" value="2.82 A"/>
    <property type="chains" value="B=1-354"/>
</dbReference>
<dbReference type="PDB" id="8E9X">
    <property type="method" value="EM"/>
    <property type="resolution" value="2.70 A"/>
    <property type="chains" value="B=136-354"/>
</dbReference>
<dbReference type="PDB" id="8FN1">
    <property type="method" value="EM"/>
    <property type="resolution" value="2.88 A"/>
    <property type="chains" value="B=1-57, B=182-354"/>
</dbReference>
<dbReference type="PDB" id="8HPT">
    <property type="method" value="EM"/>
    <property type="resolution" value="3.39 A"/>
    <property type="chains" value="B=4-57, B=182-354"/>
</dbReference>
<dbReference type="PDB" id="8HQC">
    <property type="method" value="EM"/>
    <property type="resolution" value="3.89 A"/>
    <property type="chains" value="B=4-57, B=182-354"/>
</dbReference>
<dbReference type="PDB" id="8I95">
    <property type="method" value="EM"/>
    <property type="resolution" value="2.88 A"/>
    <property type="chains" value="A=4-57, A=182-354"/>
</dbReference>
<dbReference type="PDB" id="8I97">
    <property type="method" value="EM"/>
    <property type="resolution" value="3.19 A"/>
    <property type="chains" value="A=4-57, A=182-354"/>
</dbReference>
<dbReference type="PDB" id="8I9L">
    <property type="method" value="EM"/>
    <property type="resolution" value="3.18 A"/>
    <property type="chains" value="A=4-57, A=182-354"/>
</dbReference>
<dbReference type="PDB" id="8I9S">
    <property type="method" value="EM"/>
    <property type="resolution" value="3.26 A"/>
    <property type="chains" value="A=4-57, A=182-354"/>
</dbReference>
<dbReference type="PDB" id="8IA2">
    <property type="method" value="EM"/>
    <property type="resolution" value="3.21 A"/>
    <property type="chains" value="B=4-57, B=182-354"/>
</dbReference>
<dbReference type="PDB" id="8IEC">
    <property type="method" value="EM"/>
    <property type="resolution" value="3.18 A"/>
    <property type="chains" value="C=1-56, C=182-354"/>
</dbReference>
<dbReference type="PDB" id="8IED">
    <property type="method" value="EM"/>
    <property type="resolution" value="3.33 A"/>
    <property type="chains" value="C=1-56, C=182-354"/>
</dbReference>
<dbReference type="PDB" id="8IY9">
    <property type="method" value="EM"/>
    <property type="resolution" value="3.37 A"/>
    <property type="chains" value="A=6-55, A=182-354"/>
</dbReference>
<dbReference type="PDB" id="8IYH">
    <property type="method" value="EM"/>
    <property type="resolution" value="3.30 A"/>
    <property type="chains" value="B=6-53, B=182-354"/>
</dbReference>
<dbReference type="PDB" id="8IYW">
    <property type="method" value="EM"/>
    <property type="resolution" value="3.45 A"/>
    <property type="chains" value="B=6-53, B=182-354"/>
</dbReference>
<dbReference type="PDB" id="8J6D">
    <property type="method" value="EM"/>
    <property type="resolution" value="3.10 A"/>
    <property type="chains" value="A=4-57, A=182-354"/>
</dbReference>
<dbReference type="PDB" id="8JER">
    <property type="method" value="EM"/>
    <property type="resolution" value="3.45 A"/>
    <property type="chains" value="A=6-57, A=183-354"/>
</dbReference>
<dbReference type="PDB" id="8JHN">
    <property type="method" value="EM"/>
    <property type="resolution" value="3.75 A"/>
    <property type="chains" value="A=4-57, A=183-354"/>
</dbReference>
<dbReference type="PDB" id="8JZP">
    <property type="method" value="EM"/>
    <property type="resolution" value="3.45 A"/>
    <property type="chains" value="B=4-57, B=182-354"/>
</dbReference>
<dbReference type="PDB" id="8JZZ">
    <property type="method" value="EM"/>
    <property type="resolution" value="3.31 A"/>
    <property type="chains" value="C=4-57, C=182-354"/>
</dbReference>
<dbReference type="PDB" id="8TZQ">
    <property type="method" value="EM"/>
    <property type="resolution" value="3.20 A"/>
    <property type="chains" value="B=1-354"/>
</dbReference>
<dbReference type="PDB" id="8U02">
    <property type="method" value="EM"/>
    <property type="resolution" value="3.28 A"/>
    <property type="chains" value="B=1-354"/>
</dbReference>
<dbReference type="PDB" id="8XWV">
    <property type="method" value="EM"/>
    <property type="resolution" value="3.07 A"/>
    <property type="chains" value="A=6-53, A=182-354"/>
</dbReference>
<dbReference type="PDB" id="8XX3">
    <property type="method" value="EM"/>
    <property type="resolution" value="3.38 A"/>
    <property type="chains" value="A=6-57, A=182-354"/>
</dbReference>
<dbReference type="PDB" id="8XX6">
    <property type="method" value="EM"/>
    <property type="resolution" value="2.99 A"/>
    <property type="chains" value="A=4-57, A=182-354"/>
</dbReference>
<dbReference type="PDB" id="8XX7">
    <property type="method" value="EM"/>
    <property type="resolution" value="3.32 A"/>
    <property type="chains" value="A/F=4-57, A/F=182-354"/>
</dbReference>
<dbReference type="PDB" id="8XXH">
    <property type="method" value="EM"/>
    <property type="resolution" value="2.80 A"/>
    <property type="chains" value="A=4-57, A=182-354"/>
</dbReference>
<dbReference type="PDB" id="8XXR">
    <property type="method" value="EM"/>
    <property type="resolution" value="3.17 A"/>
    <property type="chains" value="A=4-57, A=182-354"/>
</dbReference>
<dbReference type="PDB" id="8XXX">
    <property type="method" value="EM"/>
    <property type="resolution" value="3.17 A"/>
    <property type="chains" value="A=4-57, A=182-354"/>
</dbReference>
<dbReference type="PDB" id="8XXZ">
    <property type="method" value="EM"/>
    <property type="resolution" value="3.30 A"/>
    <property type="chains" value="A=4-57, A=182-354"/>
</dbReference>
<dbReference type="PDB" id="8XYK">
    <property type="method" value="EM"/>
    <property type="resolution" value="3.03 A"/>
    <property type="chains" value="A=4-57, A=182-354"/>
</dbReference>
<dbReference type="PDB" id="8Y0N">
    <property type="method" value="EM"/>
    <property type="resolution" value="3.07 A"/>
    <property type="chains" value="A=4-57, A=182-354"/>
</dbReference>
<dbReference type="PDB" id="8YN7">
    <property type="method" value="EM"/>
    <property type="resolution" value="2.77 A"/>
    <property type="chains" value="A=4-354"/>
</dbReference>
<dbReference type="PDB" id="8YN8">
    <property type="method" value="EM"/>
    <property type="resolution" value="2.77 A"/>
    <property type="chains" value="A=4-354"/>
</dbReference>
<dbReference type="PDB" id="9F33">
    <property type="method" value="EM"/>
    <property type="resolution" value="3.05 A"/>
    <property type="chains" value="A=1-354"/>
</dbReference>
<dbReference type="PDB" id="9F34">
    <property type="method" value="EM"/>
    <property type="resolution" value="3.09 A"/>
    <property type="chains" value="A=1-354"/>
</dbReference>
<dbReference type="PDBsum" id="6FUF"/>
<dbReference type="PDBsum" id="6G79"/>
<dbReference type="PDBsum" id="6K41"/>
<dbReference type="PDBsum" id="6OIK"/>
<dbReference type="PDBsum" id="6WWZ"/>
<dbReference type="PDBsum" id="7D76"/>
<dbReference type="PDBsum" id="7D77"/>
<dbReference type="PDBsum" id="7EJ0"/>
<dbReference type="PDBsum" id="7EJ8"/>
<dbReference type="PDBsum" id="7EJA"/>
<dbReference type="PDBsum" id="7EJK"/>
<dbReference type="PDBsum" id="7QVM"/>
<dbReference type="PDBsum" id="7T8X"/>
<dbReference type="PDBsum" id="7T90"/>
<dbReference type="PDBsum" id="7T94"/>
<dbReference type="PDBsum" id="7T96"/>
<dbReference type="PDBsum" id="7W2Z"/>
<dbReference type="PDBsum" id="7W6P"/>
<dbReference type="PDBsum" id="7W7E"/>
<dbReference type="PDBsum" id="7XJJ"/>
<dbReference type="PDBsum" id="7Y24"/>
<dbReference type="PDBsum" id="8DZQ"/>
<dbReference type="PDBsum" id="8E9X"/>
<dbReference type="PDBsum" id="8FN1"/>
<dbReference type="PDBsum" id="8HPT"/>
<dbReference type="PDBsum" id="8HQC"/>
<dbReference type="PDBsum" id="8I95"/>
<dbReference type="PDBsum" id="8I97"/>
<dbReference type="PDBsum" id="8I9L"/>
<dbReference type="PDBsum" id="8I9S"/>
<dbReference type="PDBsum" id="8IA2"/>
<dbReference type="PDBsum" id="8IEC"/>
<dbReference type="PDBsum" id="8IED"/>
<dbReference type="PDBsum" id="8IY9"/>
<dbReference type="PDBsum" id="8IYH"/>
<dbReference type="PDBsum" id="8IYW"/>
<dbReference type="PDBsum" id="8J6D"/>
<dbReference type="PDBsum" id="8JER"/>
<dbReference type="PDBsum" id="8JHN"/>
<dbReference type="PDBsum" id="8JZP"/>
<dbReference type="PDBsum" id="8JZZ"/>
<dbReference type="PDBsum" id="8TZQ"/>
<dbReference type="PDBsum" id="8U02"/>
<dbReference type="PDBsum" id="8XWV"/>
<dbReference type="PDBsum" id="8XX3"/>
<dbReference type="PDBsum" id="8XX6"/>
<dbReference type="PDBsum" id="8XX7"/>
<dbReference type="PDBsum" id="8XXH"/>
<dbReference type="PDBsum" id="8XXR"/>
<dbReference type="PDBsum" id="8XXX"/>
<dbReference type="PDBsum" id="8XXZ"/>
<dbReference type="PDBsum" id="8XYK"/>
<dbReference type="PDBsum" id="8Y0N"/>
<dbReference type="PDBsum" id="8YN7"/>
<dbReference type="PDBsum" id="8YN8"/>
<dbReference type="PDBsum" id="9F33"/>
<dbReference type="PDBsum" id="9F34"/>
<dbReference type="EMDB" id="EMD-14180"/>
<dbReference type="EMDB" id="EMD-20079"/>
<dbReference type="EMDB" id="EMD-21950"/>
<dbReference type="EMDB" id="EMD-25748"/>
<dbReference type="EMDB" id="EMD-25749"/>
<dbReference type="EMDB" id="EMD-25751"/>
<dbReference type="EMDB" id="EMD-25752"/>
<dbReference type="EMDB" id="EMD-26597"/>
<dbReference type="EMDB" id="EMD-26598"/>
<dbReference type="EMDB" id="EMD-26599"/>
<dbReference type="EMDB" id="EMD-27805"/>
<dbReference type="EMDB" id="EMD-27967"/>
<dbReference type="EMDB" id="EMD-29303"/>
<dbReference type="EMDB" id="EMD-30602"/>
<dbReference type="EMDB" id="EMD-30603"/>
<dbReference type="EMDB" id="EMD-31147"/>
<dbReference type="EMDB" id="EMD-31156"/>
<dbReference type="EMDB" id="EMD-31157"/>
<dbReference type="EMDB" id="EMD-31162"/>
<dbReference type="EMDB" id="EMD-32268"/>
<dbReference type="EMDB" id="EMD-32331"/>
<dbReference type="EMDB" id="EMD-32342"/>
<dbReference type="EMDB" id="EMD-33229"/>
<dbReference type="EMDB" id="EMD-33585"/>
<dbReference type="EMDB" id="EMD-34943"/>
<dbReference type="EMDB" id="EMD-34947"/>
<dbReference type="EMDB" id="EMD-35257"/>
<dbReference type="EMDB" id="EMD-35259"/>
<dbReference type="EMDB" id="EMD-35275"/>
<dbReference type="EMDB" id="EMD-35282"/>
<dbReference type="EMDB" id="EMD-35292"/>
<dbReference type="EMDB" id="EMD-35378"/>
<dbReference type="EMDB" id="EMD-35380"/>
<dbReference type="EMDB" id="EMD-35817"/>
<dbReference type="EMDB" id="EMD-35822"/>
<dbReference type="EMDB" id="EMD-35831"/>
<dbReference type="EMDB" id="EMD-36001"/>
<dbReference type="EMDB" id="EMD-36193"/>
<dbReference type="EMDB" id="EMD-36280"/>
<dbReference type="EMDB" id="EMD-36750"/>
<dbReference type="EMDB" id="EMD-36755"/>
<dbReference type="EMDB" id="EMD-38743"/>
<dbReference type="EMDB" id="EMD-38744"/>
<dbReference type="EMDB" id="EMD-38747"/>
<dbReference type="EMDB" id="EMD-38748"/>
<dbReference type="EMDB" id="EMD-38749"/>
<dbReference type="EMDB" id="EMD-38759"/>
<dbReference type="EMDB" id="EMD-38764"/>
<dbReference type="EMDB" id="EMD-38766"/>
<dbReference type="EMDB" id="EMD-38776"/>
<dbReference type="EMDB" id="EMD-38809"/>
<dbReference type="EMDB" id="EMD-39417"/>
<dbReference type="EMDB" id="EMD-39418"/>
<dbReference type="EMDB" id="EMD-41766"/>
<dbReference type="EMDB" id="EMD-41776"/>
<dbReference type="EMDB" id="EMD-50168"/>
<dbReference type="EMDB" id="EMD-50169"/>
<dbReference type="EMDB" id="EMD-9911"/>
<dbReference type="SMR" id="P09471"/>
<dbReference type="BioGRID" id="109037">
    <property type="interactions" value="86"/>
</dbReference>
<dbReference type="ELM" id="P09471"/>
<dbReference type="FunCoup" id="P09471">
    <property type="interactions" value="1538"/>
</dbReference>
<dbReference type="IntAct" id="P09471">
    <property type="interactions" value="64"/>
</dbReference>
<dbReference type="MINT" id="P09471"/>
<dbReference type="STRING" id="9606.ENSP00000262494"/>
<dbReference type="BindingDB" id="P09471"/>
<dbReference type="ChEMBL" id="CHEMBL4742"/>
<dbReference type="iPTMnet" id="P09471"/>
<dbReference type="PhosphoSitePlus" id="P09471"/>
<dbReference type="SwissPalm" id="P09471"/>
<dbReference type="BioMuta" id="GNAO1"/>
<dbReference type="DMDM" id="232133"/>
<dbReference type="jPOST" id="P09471"/>
<dbReference type="MassIVE" id="P09471"/>
<dbReference type="PaxDb" id="9606-ENSP00000262494"/>
<dbReference type="PeptideAtlas" id="P09471"/>
<dbReference type="ProteomicsDB" id="52224">
    <molecule id="P09471-1"/>
</dbReference>
<dbReference type="ProteomicsDB" id="52225">
    <molecule id="P09471-2"/>
</dbReference>
<dbReference type="Pumba" id="P09471"/>
<dbReference type="Antibodypedia" id="3649">
    <property type="antibodies" value="261 antibodies from 34 providers"/>
</dbReference>
<dbReference type="DNASU" id="2775"/>
<dbReference type="Ensembl" id="ENST00000262493.12">
    <molecule id="P09471-1"/>
    <property type="protein sequence ID" value="ENSP00000262493.6"/>
    <property type="gene ID" value="ENSG00000087258.17"/>
</dbReference>
<dbReference type="Ensembl" id="ENST00000262494.13">
    <molecule id="P09471-2"/>
    <property type="protein sequence ID" value="ENSP00000262494.7"/>
    <property type="gene ID" value="ENSG00000087258.17"/>
</dbReference>
<dbReference type="Ensembl" id="ENST00000638705.1">
    <molecule id="P09471-1"/>
    <property type="protein sequence ID" value="ENSP00000491223.1"/>
    <property type="gene ID" value="ENSG00000087258.17"/>
</dbReference>
<dbReference type="Ensembl" id="ENST00000640469.2">
    <molecule id="P09471-1"/>
    <property type="protein sequence ID" value="ENSP00000491875.2"/>
    <property type="gene ID" value="ENSG00000087258.17"/>
</dbReference>
<dbReference type="GeneID" id="2775"/>
<dbReference type="KEGG" id="hsa:2775"/>
<dbReference type="MANE-Select" id="ENST00000262493.12">
    <property type="protein sequence ID" value="ENSP00000262493.6"/>
    <property type="RefSeq nucleotide sequence ID" value="NM_020988.3"/>
    <property type="RefSeq protein sequence ID" value="NP_066268.1"/>
</dbReference>
<dbReference type="UCSC" id="uc002eit.5">
    <molecule id="P09471-1"/>
    <property type="organism name" value="human"/>
</dbReference>
<dbReference type="AGR" id="HGNC:4389"/>
<dbReference type="CTD" id="2775"/>
<dbReference type="DisGeNET" id="2775"/>
<dbReference type="GeneCards" id="GNAO1"/>
<dbReference type="GeneReviews" id="GNAO1"/>
<dbReference type="HGNC" id="HGNC:4389">
    <property type="gene designation" value="GNAO1"/>
</dbReference>
<dbReference type="HPA" id="ENSG00000087258">
    <property type="expression patterns" value="Tissue enhanced (brain, retina)"/>
</dbReference>
<dbReference type="MalaCards" id="GNAO1"/>
<dbReference type="MIM" id="139311">
    <property type="type" value="gene"/>
</dbReference>
<dbReference type="MIM" id="615473">
    <property type="type" value="phenotype"/>
</dbReference>
<dbReference type="MIM" id="617493">
    <property type="type" value="phenotype"/>
</dbReference>
<dbReference type="neXtProt" id="NX_P09471"/>
<dbReference type="OpenTargets" id="ENSG00000087258"/>
<dbReference type="Orphanet" id="1934">
    <property type="disease" value="Early infantile developmental and epileptic encephalopathy"/>
</dbReference>
<dbReference type="Orphanet" id="592564">
    <property type="disease" value="GNAO1-related developmental delay-seizures-movement disorder spectrum"/>
</dbReference>
<dbReference type="PharmGKB" id="PA28771"/>
<dbReference type="VEuPathDB" id="HostDB:ENSG00000087258"/>
<dbReference type="eggNOG" id="KOG0082">
    <property type="taxonomic scope" value="Eukaryota"/>
</dbReference>
<dbReference type="GeneTree" id="ENSGT00940000155883"/>
<dbReference type="HOGENOM" id="CLU_014184_6_0_1"/>
<dbReference type="InParanoid" id="P09471"/>
<dbReference type="OMA" id="GKKDYMP"/>
<dbReference type="OrthoDB" id="5817230at2759"/>
<dbReference type="PAN-GO" id="P09471">
    <property type="GO annotations" value="8 GO annotations based on evolutionary models"/>
</dbReference>
<dbReference type="PhylomeDB" id="P09471"/>
<dbReference type="TreeFam" id="TF300673"/>
<dbReference type="PathwayCommons" id="P09471"/>
<dbReference type="Reactome" id="R-HSA-4086398">
    <property type="pathway name" value="Ca2+ pathway"/>
</dbReference>
<dbReference type="SignaLink" id="P09471"/>
<dbReference type="SIGNOR" id="P09471"/>
<dbReference type="BioGRID-ORCS" id="2775">
    <property type="hits" value="11 hits in 1143 CRISPR screens"/>
</dbReference>
<dbReference type="CD-CODE" id="FB4E32DD">
    <property type="entry name" value="Presynaptic clusters and postsynaptic densities"/>
</dbReference>
<dbReference type="ChiTaRS" id="GNAO1">
    <property type="organism name" value="human"/>
</dbReference>
<dbReference type="GeneWiki" id="GNAO1"/>
<dbReference type="GenomeRNAi" id="2775"/>
<dbReference type="Pharos" id="P09471">
    <property type="development level" value="Tbio"/>
</dbReference>
<dbReference type="PRO" id="PR:P09471"/>
<dbReference type="Proteomes" id="UP000005640">
    <property type="component" value="Chromosome 16"/>
</dbReference>
<dbReference type="RNAct" id="P09471">
    <property type="molecule type" value="protein"/>
</dbReference>
<dbReference type="Bgee" id="ENSG00000087258">
    <property type="expression patterns" value="Expressed in cortical plate and 187 other cell types or tissues"/>
</dbReference>
<dbReference type="ExpressionAtlas" id="P09471">
    <property type="expression patterns" value="baseline and differential"/>
</dbReference>
<dbReference type="GO" id="GO:0044297">
    <property type="term" value="C:cell body"/>
    <property type="evidence" value="ECO:0007669"/>
    <property type="project" value="Ensembl"/>
</dbReference>
<dbReference type="GO" id="GO:0005737">
    <property type="term" value="C:cytoplasm"/>
    <property type="evidence" value="ECO:0000318"/>
    <property type="project" value="GO_Central"/>
</dbReference>
<dbReference type="GO" id="GO:0030425">
    <property type="term" value="C:dendrite"/>
    <property type="evidence" value="ECO:0007669"/>
    <property type="project" value="Ensembl"/>
</dbReference>
<dbReference type="GO" id="GO:0098982">
    <property type="term" value="C:GABA-ergic synapse"/>
    <property type="evidence" value="ECO:0007669"/>
    <property type="project" value="Ensembl"/>
</dbReference>
<dbReference type="GO" id="GO:0098978">
    <property type="term" value="C:glutamatergic synapse"/>
    <property type="evidence" value="ECO:0007669"/>
    <property type="project" value="Ensembl"/>
</dbReference>
<dbReference type="GO" id="GO:0005834">
    <property type="term" value="C:heterotrimeric G-protein complex"/>
    <property type="evidence" value="ECO:0000314"/>
    <property type="project" value="UniProtKB"/>
</dbReference>
<dbReference type="GO" id="GO:0098688">
    <property type="term" value="C:parallel fiber to Purkinje cell synapse"/>
    <property type="evidence" value="ECO:0007669"/>
    <property type="project" value="Ensembl"/>
</dbReference>
<dbReference type="GO" id="GO:0005886">
    <property type="term" value="C:plasma membrane"/>
    <property type="evidence" value="ECO:0000314"/>
    <property type="project" value="UniProtKB"/>
</dbReference>
<dbReference type="GO" id="GO:0045211">
    <property type="term" value="C:postsynaptic membrane"/>
    <property type="evidence" value="ECO:0007669"/>
    <property type="project" value="Ensembl"/>
</dbReference>
<dbReference type="GO" id="GO:0042734">
    <property type="term" value="C:presynaptic membrane"/>
    <property type="evidence" value="ECO:0007669"/>
    <property type="project" value="Ensembl"/>
</dbReference>
<dbReference type="GO" id="GO:0010854">
    <property type="term" value="F:adenylate cyclase regulator activity"/>
    <property type="evidence" value="ECO:0000250"/>
    <property type="project" value="UniProt"/>
</dbReference>
<dbReference type="GO" id="GO:0051430">
    <property type="term" value="F:corticotropin-releasing hormone receptor 1 binding"/>
    <property type="evidence" value="ECO:0000318"/>
    <property type="project" value="GO_Central"/>
</dbReference>
<dbReference type="GO" id="GO:0003925">
    <property type="term" value="F:G protein activity"/>
    <property type="evidence" value="ECO:0000250"/>
    <property type="project" value="UniProt"/>
</dbReference>
<dbReference type="GO" id="GO:0031821">
    <property type="term" value="F:G protein-coupled serotonin receptor binding"/>
    <property type="evidence" value="ECO:0000318"/>
    <property type="project" value="GO_Central"/>
</dbReference>
<dbReference type="GO" id="GO:0031683">
    <property type="term" value="F:G-protein beta/gamma-subunit complex binding"/>
    <property type="evidence" value="ECO:0000318"/>
    <property type="project" value="GO_Central"/>
</dbReference>
<dbReference type="GO" id="GO:0005525">
    <property type="term" value="F:GTP binding"/>
    <property type="evidence" value="ECO:0007669"/>
    <property type="project" value="UniProtKB-KW"/>
</dbReference>
<dbReference type="GO" id="GO:0003924">
    <property type="term" value="F:GTPase activity"/>
    <property type="evidence" value="ECO:0000318"/>
    <property type="project" value="GO_Central"/>
</dbReference>
<dbReference type="GO" id="GO:0046872">
    <property type="term" value="F:metal ion binding"/>
    <property type="evidence" value="ECO:0007669"/>
    <property type="project" value="UniProtKB-KW"/>
</dbReference>
<dbReference type="GO" id="GO:0031852">
    <property type="term" value="F:mu-type opioid receptor binding"/>
    <property type="evidence" value="ECO:0000318"/>
    <property type="project" value="GO_Central"/>
</dbReference>
<dbReference type="GO" id="GO:0007198">
    <property type="term" value="P:adenylate cyclase-inhibiting serotonin receptor signaling pathway"/>
    <property type="evidence" value="ECO:0000314"/>
    <property type="project" value="UniProtKB"/>
</dbReference>
<dbReference type="GO" id="GO:0007188">
    <property type="term" value="P:adenylate cyclase-modulating G protein-coupled receptor signaling pathway"/>
    <property type="evidence" value="ECO:0000318"/>
    <property type="project" value="GO_Central"/>
</dbReference>
<dbReference type="GO" id="GO:0007212">
    <property type="term" value="P:G protein-coupled dopamine receptor signaling pathway"/>
    <property type="evidence" value="ECO:0000318"/>
    <property type="project" value="GO_Central"/>
</dbReference>
<dbReference type="GO" id="GO:0007626">
    <property type="term" value="P:locomotory behavior"/>
    <property type="evidence" value="ECO:0007669"/>
    <property type="project" value="Ensembl"/>
</dbReference>
<dbReference type="GO" id="GO:0006936">
    <property type="term" value="P:muscle contraction"/>
    <property type="evidence" value="ECO:0000304"/>
    <property type="project" value="ProtInc"/>
</dbReference>
<dbReference type="GO" id="GO:0046676">
    <property type="term" value="P:negative regulation of insulin secretion"/>
    <property type="evidence" value="ECO:0007669"/>
    <property type="project" value="Ensembl"/>
</dbReference>
<dbReference type="GO" id="GO:0099170">
    <property type="term" value="P:postsynaptic modulation of chemical synaptic transmission"/>
    <property type="evidence" value="ECO:0007669"/>
    <property type="project" value="Ensembl"/>
</dbReference>
<dbReference type="GO" id="GO:0008016">
    <property type="term" value="P:regulation of heart contraction"/>
    <property type="evidence" value="ECO:0007669"/>
    <property type="project" value="Ensembl"/>
</dbReference>
<dbReference type="GO" id="GO:0006904">
    <property type="term" value="P:vesicle docking involved in exocytosis"/>
    <property type="evidence" value="ECO:0007669"/>
    <property type="project" value="Ensembl"/>
</dbReference>
<dbReference type="CDD" id="cd00066">
    <property type="entry name" value="G-alpha"/>
    <property type="match status" value="1"/>
</dbReference>
<dbReference type="FunFam" id="3.40.50.300:FF:003559">
    <property type="entry name" value="Guanine nucleotide-binding protein G(i) subunit alpha-1"/>
    <property type="match status" value="1"/>
</dbReference>
<dbReference type="FunFam" id="3.40.50.300:FF:002307">
    <property type="entry name" value="Guanine nucleotide-binding protein G(k) subunit alpha"/>
    <property type="match status" value="1"/>
</dbReference>
<dbReference type="FunFam" id="1.10.400.10:FF:000020">
    <property type="entry name" value="Guanine nucleotide-binding protein G(o) subunit alpha"/>
    <property type="match status" value="1"/>
</dbReference>
<dbReference type="Gene3D" id="1.10.400.10">
    <property type="entry name" value="GI Alpha 1, domain 2-like"/>
    <property type="match status" value="1"/>
</dbReference>
<dbReference type="Gene3D" id="3.40.50.300">
    <property type="entry name" value="P-loop containing nucleotide triphosphate hydrolases"/>
    <property type="match status" value="1"/>
</dbReference>
<dbReference type="InterPro" id="IPR001408">
    <property type="entry name" value="Gprotein_alpha_I"/>
</dbReference>
<dbReference type="InterPro" id="IPR001019">
    <property type="entry name" value="Gprotein_alpha_su"/>
</dbReference>
<dbReference type="InterPro" id="IPR011025">
    <property type="entry name" value="GproteinA_insert"/>
</dbReference>
<dbReference type="InterPro" id="IPR027417">
    <property type="entry name" value="P-loop_NTPase"/>
</dbReference>
<dbReference type="PANTHER" id="PTHR10218">
    <property type="entry name" value="GTP-BINDING PROTEIN ALPHA SUBUNIT"/>
    <property type="match status" value="1"/>
</dbReference>
<dbReference type="PANTHER" id="PTHR10218:SF361">
    <property type="entry name" value="GUANINE NUCLEOTIDE-BINDING PROTEIN G(O) SUBUNIT ALPHA"/>
    <property type="match status" value="1"/>
</dbReference>
<dbReference type="Pfam" id="PF00503">
    <property type="entry name" value="G-alpha"/>
    <property type="match status" value="1"/>
</dbReference>
<dbReference type="PRINTS" id="PR00318">
    <property type="entry name" value="GPROTEINA"/>
</dbReference>
<dbReference type="PRINTS" id="PR00441">
    <property type="entry name" value="GPROTEINAI"/>
</dbReference>
<dbReference type="SMART" id="SM00275">
    <property type="entry name" value="G_alpha"/>
    <property type="match status" value="1"/>
</dbReference>
<dbReference type="SUPFAM" id="SSF52540">
    <property type="entry name" value="P-loop containing nucleoside triphosphate hydrolases"/>
    <property type="match status" value="1"/>
</dbReference>
<dbReference type="SUPFAM" id="SSF47895">
    <property type="entry name" value="Transducin (alpha subunit), insertion domain"/>
    <property type="match status" value="1"/>
</dbReference>
<dbReference type="PROSITE" id="PS51882">
    <property type="entry name" value="G_ALPHA"/>
    <property type="match status" value="1"/>
</dbReference>
<evidence type="ECO:0000250" key="1"/>
<evidence type="ECO:0000250" key="2">
    <source>
        <dbReference type="UniProtKB" id="P18872"/>
    </source>
</evidence>
<evidence type="ECO:0000255" key="3">
    <source>
        <dbReference type="PROSITE-ProRule" id="PRU01230"/>
    </source>
</evidence>
<evidence type="ECO:0000269" key="4">
    <source>
    </source>
</evidence>
<evidence type="ECO:0000269" key="5">
    <source>
    </source>
</evidence>
<evidence type="ECO:0000269" key="6">
    <source>
    </source>
</evidence>
<evidence type="ECO:0000269" key="7">
    <source>
    </source>
</evidence>
<evidence type="ECO:0000269" key="8">
    <source>
    </source>
</evidence>
<evidence type="ECO:0000269" key="9">
    <source>
    </source>
</evidence>
<evidence type="ECO:0000269" key="10">
    <source>
    </source>
</evidence>
<evidence type="ECO:0000269" key="11">
    <source>
    </source>
</evidence>
<evidence type="ECO:0000269" key="12">
    <source>
    </source>
</evidence>
<evidence type="ECO:0000269" key="13">
    <source>
    </source>
</evidence>
<evidence type="ECO:0000269" key="14">
    <source>
    </source>
</evidence>
<evidence type="ECO:0000269" key="15">
    <source>
    </source>
</evidence>
<evidence type="ECO:0000269" key="16">
    <source>
    </source>
</evidence>
<evidence type="ECO:0000269" key="17">
    <source>
    </source>
</evidence>
<evidence type="ECO:0000303" key="18">
    <source>
    </source>
</evidence>
<evidence type="ECO:0000303" key="19">
    <source ref="3"/>
</evidence>
<evidence type="ECO:0000305" key="20"/>
<evidence type="ECO:0007744" key="21">
    <source>
        <dbReference type="PDB" id="6G79"/>
    </source>
</evidence>
<evidence type="ECO:0007744" key="22">
    <source>
        <dbReference type="PDB" id="7D76"/>
    </source>
</evidence>
<evidence type="ECO:0007744" key="23">
    <source>
        <dbReference type="PDB" id="7D77"/>
    </source>
</evidence>
<evidence type="ECO:0007829" key="24">
    <source>
        <dbReference type="PDB" id="6WWZ"/>
    </source>
</evidence>
<evidence type="ECO:0007829" key="25">
    <source>
        <dbReference type="PDB" id="7D76"/>
    </source>
</evidence>
<evidence type="ECO:0007829" key="26">
    <source>
        <dbReference type="PDB" id="7D77"/>
    </source>
</evidence>
<evidence type="ECO:0007829" key="27">
    <source>
        <dbReference type="PDB" id="7T94"/>
    </source>
</evidence>
<evidence type="ECO:0007829" key="28">
    <source>
        <dbReference type="PDB" id="7W2Z"/>
    </source>
</evidence>
<evidence type="ECO:0007829" key="29">
    <source>
        <dbReference type="PDB" id="8E9X"/>
    </source>
</evidence>
<evidence type="ECO:0007829" key="30">
    <source>
        <dbReference type="PDB" id="8IA2"/>
    </source>
</evidence>
<evidence type="ECO:0007829" key="31">
    <source>
        <dbReference type="PDB" id="8TZQ"/>
    </source>
</evidence>
<evidence type="ECO:0007829" key="32">
    <source>
        <dbReference type="PDB" id="8U02"/>
    </source>
</evidence>
<reference key="1">
    <citation type="journal article" date="1991" name="Proc. Natl. Acad. Sci. U.S.A.">
        <title>Structure of the human gene and two rat cDNAs encoding the alpha chain of GTP-binding regulatory protein Go: two different mRNAs are generated by alternative splicing.</title>
        <authorList>
            <person name="Tsukamoto T."/>
            <person name="Toyama R."/>
            <person name="Itoh H."/>
            <person name="Kozasa T."/>
            <person name="Matsuoka M."/>
            <person name="Kaziro Y."/>
        </authorList>
    </citation>
    <scope>NUCLEOTIDE SEQUENCE [GENOMIC DNA]</scope>
    <scope>ALTERNATIVE SPLICING</scope>
</reference>
<reference key="2">
    <citation type="journal article" date="1988" name="Biochem. Biophys. Res. Commun.">
        <title>Molecular cloning and DNA sequence analysis of the human guanine nucleotide-binding protein Go alpha.</title>
        <authorList>
            <person name="Lavu S."/>
            <person name="Clark J."/>
            <person name="Swarup R."/>
            <person name="Matshushima K."/>
            <person name="Paturu K."/>
            <person name="Moss J."/>
            <person name="Kung H.-F."/>
        </authorList>
    </citation>
    <scope>NUCLEOTIDE SEQUENCE [GENOMIC DNA / MRNA]</scope>
</reference>
<reference key="3">
    <citation type="submission" date="2002-03" db="EMBL/GenBank/DDBJ databases">
        <title>cDNA clones of human proteins involved in signal transduction sequenced by the Guthrie cDNA resource center (www.cdna.org).</title>
        <authorList>
            <person name="Puhl H.L. III"/>
            <person name="Ikeda S.R."/>
            <person name="Aronstam R.S."/>
        </authorList>
    </citation>
    <scope>NUCLEOTIDE SEQUENCE [LARGE SCALE MRNA] (ISOFORMS ALPHA-1 AND ALPHA-2)</scope>
    <source>
        <tissue>Brain</tissue>
    </source>
</reference>
<reference key="4">
    <citation type="journal article" date="1999" name="Biol. Reprod.">
        <title>Identification and expression of GO1 and 2 alpha-subunit transcripts in human myometrium in relation to pregnancy.</title>
        <authorList>
            <person name="Duc-Goiran P."/>
            <person name="Bourgeois C."/>
            <person name="Mignot T.M."/>
            <person name="Robert B."/>
            <person name="Tanguy G."/>
            <person name="Ferre F."/>
        </authorList>
    </citation>
    <scope>NUCLEOTIDE SEQUENCE [MRNA] OF 246-354 (ISOFORM ALPHA-2)</scope>
    <source>
        <tissue>Myometrium</tissue>
    </source>
</reference>
<reference key="5">
    <citation type="journal article" date="2014" name="Nat. Commun.">
        <title>Global profiling of co- and post-translationally N-myristoylated proteomes in human cells.</title>
        <authorList>
            <person name="Thinon E."/>
            <person name="Serwa R.A."/>
            <person name="Broncel M."/>
            <person name="Brannigan J.A."/>
            <person name="Brassat U."/>
            <person name="Wright M.H."/>
            <person name="Heal W.P."/>
            <person name="Wilkinson A.J."/>
            <person name="Mann D.J."/>
            <person name="Tate E.W."/>
        </authorList>
    </citation>
    <scope>MYRISTOYLATION AT GLY-2</scope>
    <scope>CLEAVAGE OF INITIATOR METHIONINE</scope>
    <scope>IDENTIFICATION BY MASS SPECTROMETRY</scope>
</reference>
<reference evidence="21" key="6">
    <citation type="journal article" date="2018" name="Nature">
        <title>Cryo-EM structure of the serotonin 5-HT1B receptor coupled to heterotrimeric Go.</title>
        <authorList>
            <person name="Garcia-Nafria J."/>
            <person name="Nehme R."/>
            <person name="Edwards P.C."/>
            <person name="Tate C.G."/>
        </authorList>
    </citation>
    <scope>STRUCTURE BY ELECTRON MICROSCOPY (3.78 ANGSTROMS) IN COMPLEX WITH HTR1B; GNB1 AND GNG2</scope>
    <scope>FUNCTION</scope>
    <scope>SUBUNIT</scope>
</reference>
<reference evidence="22 23" key="7">
    <citation type="journal article" date="2021" name="Nature">
        <title>Structures of the glucocorticoid-bound adhesion receptor GPR97-Go complex.</title>
        <authorList>
            <person name="Ping Y.Q."/>
            <person name="Mao C."/>
            <person name="Xiao P."/>
            <person name="Zhao R.J."/>
            <person name="Jiang Y."/>
            <person name="Yang Z."/>
            <person name="An W.T."/>
            <person name="Shen D.D."/>
            <person name="Yang F."/>
            <person name="Zhang H."/>
            <person name="Qu C."/>
            <person name="Shen Q."/>
            <person name="Tian C."/>
            <person name="Li Z.J."/>
            <person name="Li S."/>
            <person name="Wang G.Y."/>
            <person name="Tao X."/>
            <person name="Wen X."/>
            <person name="Zhong Y.N."/>
            <person name="Yang J."/>
            <person name="Yi F."/>
            <person name="Yu X."/>
            <person name="Xu H.E."/>
            <person name="Zhang Y."/>
            <person name="Sun J.P."/>
        </authorList>
    </citation>
    <scope>STRUCTURE BY ELECTRON MICROSCOPY (2.90 ANGSTROMS) OF 4-354</scope>
    <scope>INTERACTION WITH ADGRG3</scope>
    <scope>PALMITOYLATION AT CYS-351</scope>
    <scope>MUTAGENESIS OF CYS-351</scope>
</reference>
<reference key="8">
    <citation type="journal article" date="2013" name="Am. J. Hum. Genet.">
        <title>De Novo mutations in GNAO1, encoding a Galphao subunit of heterotrimeric G proteins, cause epileptic encephalopathy.</title>
        <authorList>
            <person name="Nakamura K."/>
            <person name="Kodera H."/>
            <person name="Akita T."/>
            <person name="Shiina M."/>
            <person name="Kato M."/>
            <person name="Hoshino H."/>
            <person name="Terashima H."/>
            <person name="Osaka H."/>
            <person name="Nakamura S."/>
            <person name="Tohyama J."/>
            <person name="Kumada T."/>
            <person name="Furukawa T."/>
            <person name="Iwata S."/>
            <person name="Shiihara T."/>
            <person name="Kubota M."/>
            <person name="Miyatake S."/>
            <person name="Koshimizu E."/>
            <person name="Nishiyama K."/>
            <person name="Nakashima M."/>
            <person name="Tsurusaki Y."/>
            <person name="Miyake N."/>
            <person name="Hayasaka K."/>
            <person name="Ogata K."/>
            <person name="Fukuda A."/>
            <person name="Matsumoto N."/>
            <person name="Saitsu H."/>
        </authorList>
    </citation>
    <scope>VARIANTS DEE17 GLY-174; 191-THR--PHE-197 DEL; ARG-203 AND ASN-279</scope>
    <scope>CHARACTERIZATION OF VARIANTS DEE17 GLY-174; 191-THR--PHE-197 DEL; ARG-203 AND ASN-279</scope>
    <scope>INVOLVEMENT IN DEE17</scope>
</reference>
<reference key="9">
    <citation type="journal article" date="2015" name="Clin. Chim. Acta">
        <title>Clinical whole-exome sequencing reveals a novel missense pathogenic variant of GNAO1 in a patient with infantile-onset epilepsy.</title>
        <authorList>
            <person name="Law C.Y."/>
            <person name="Chang S.T."/>
            <person name="Cho S.Y."/>
            <person name="Yau E.K."/>
            <person name="Ng G.S."/>
            <person name="Fong N.C."/>
            <person name="Lam C.W."/>
        </authorList>
    </citation>
    <scope>VARIANT DEE17 ARG-40</scope>
</reference>
<reference key="10">
    <citation type="journal article" date="2016" name="J. Child Neurol.">
        <title>Progressive movement disorder in brothers carrying a GNAO1 mutation responsive to deep brain stimulation.</title>
        <authorList>
            <person name="Kulkarni N."/>
            <person name="Tang S."/>
            <person name="Bhardwaj R."/>
            <person name="Bernes S."/>
            <person name="Grebe T.A."/>
        </authorList>
    </citation>
    <scope>VARIANT NEDIM HIS-209</scope>
</reference>
<reference key="11">
    <citation type="journal article" date="2016" name="J. Child Neurol.">
        <title>Recurrent GNAO1 mutations associated with developmental delay and a movement disorder.</title>
        <authorList>
            <person name="Menke L.A."/>
            <person name="Engelen M."/>
            <person name="Alders M."/>
            <person name="Odekerken V.J."/>
            <person name="Baas F."/>
            <person name="Cobben J.M."/>
        </authorList>
    </citation>
    <scope>VARIANTS NEDIM HIS-209 AND LEU-209</scope>
</reference>
<reference key="12">
    <citation type="journal article" date="2016" name="Pediatr. Neurol.">
        <title>Clinical course of six children with GNAO1 mutations causing a severe and distinctive movement disorder.</title>
        <authorList>
            <person name="Ananth A.L."/>
            <person name="Robichaux-Viehoever A."/>
            <person name="Kim Y.M."/>
            <person name="Hanson-Kahn A."/>
            <person name="Cox R."/>
            <person name="Enns G.M."/>
            <person name="Strober J."/>
            <person name="Willing M."/>
            <person name="Schlaggar B.L."/>
            <person name="Wu Y.W."/>
            <person name="Bernstein J.A."/>
        </authorList>
    </citation>
    <scope>VARIANTS NEDIM GLY-209; HIS-209 AND LYS-246</scope>
</reference>
<reference key="13">
    <citation type="journal article" date="2016" name="Am. J. Hum. Genet.">
        <title>De novo mutations in SLC1A2 and CACNA1A are important causes of epileptic encephalopathies.</title>
        <authorList>
            <consortium name="Epi4K Consortium"/>
        </authorList>
    </citation>
    <scope>VARIANT DEE17 ASN-279</scope>
</reference>
<reference key="14">
    <citation type="journal article" date="2016" name="Eur. J. Hum. Genet.">
        <title>Phenotypic spectrum of GNAO1 variants: epileptic encephalopathy to involuntary movements with severe developmental delay.</title>
        <authorList>
            <person name="Saitsu H."/>
            <person name="Fukai R."/>
            <person name="Ben-Zeev B."/>
            <person name="Sakai Y."/>
            <person name="Mimaki M."/>
            <person name="Okamoto N."/>
            <person name="Suzuki Y."/>
            <person name="Monden Y."/>
            <person name="Saito H."/>
            <person name="Tziperman B."/>
            <person name="Torio M."/>
            <person name="Akamine S."/>
            <person name="Takahashi N."/>
            <person name="Osaka H."/>
            <person name="Yamagata T."/>
            <person name="Nakamura K."/>
            <person name="Tsurusaki Y."/>
            <person name="Nakashima M."/>
            <person name="Miyake N."/>
            <person name="Shiina M."/>
            <person name="Ogata K."/>
            <person name="Matsumoto N."/>
        </authorList>
    </citation>
    <scope>INVOLVEMENT IN NEDIM</scope>
    <scope>VARIANTS NEDIM CYS-209; VAL-227 AND LYS-246</scope>
    <scope>VARIANT DEE17 ARG-203</scope>
</reference>
<reference key="15">
    <citation type="journal article" date="2017" name="Hum. Mutat.">
        <title>Diagnostic targeted resequencing in 349 patients with drug-resistant pediatric epilepsies identifies causative mutations in 30 different genes.</title>
        <authorList>
            <consortium name="Clinical Study Group"/>
            <person name="Parrini E."/>
            <person name="Marini C."/>
            <person name="Mei D."/>
            <person name="Galuppi A."/>
            <person name="Cellini E."/>
            <person name="Pucatti D."/>
            <person name="Chiti L."/>
            <person name="Rutigliano D."/>
            <person name="Bianchini C."/>
            <person name="Virdo S."/>
            <person name="De Vita D."/>
            <person name="Bigoni S."/>
            <person name="Barba C."/>
            <person name="Mari F."/>
            <person name="Montomoli M."/>
            <person name="Pisano T."/>
            <person name="Rosati A."/>
            <person name="Guerrini R."/>
        </authorList>
    </citation>
    <scope>VARIANT DEE17 CYS-209</scope>
</reference>
<reference key="16">
    <citation type="journal article" date="2017" name="Neurol. Genet.">
        <title>GNAO1 encephalopathy: Broadening the phenotype and evaluating treatment and outcome.</title>
        <authorList>
            <person name="Danti F.R."/>
            <person name="Galosi S."/>
            <person name="Romani M."/>
            <person name="Montomoli M."/>
            <person name="Carss K.J."/>
            <person name="Raymond F.L."/>
            <person name="Parrini E."/>
            <person name="Bianchini C."/>
            <person name="McShane T."/>
            <person name="Dale R.C."/>
            <person name="Mohammad S.S."/>
            <person name="Shah U."/>
            <person name="Mahant N."/>
            <person name="Ng J."/>
            <person name="McTague A."/>
            <person name="Samanta R."/>
            <person name="Vadlamani G."/>
            <person name="Valente E.M."/>
            <person name="Leuzzi V."/>
            <person name="Kurian M.A."/>
            <person name="Guerrini R."/>
        </authorList>
    </citation>
    <scope>VARIANTS NEDIM ARG-40; GLY-47; THR-56; CYS-209 AND GLY-246</scope>
</reference>
<reference key="17">
    <citation type="journal article" date="2018" name="BMC Med. Genomics">
        <title>Efficient strategy for the molecular diagnosis of intractable early-onset epilepsy using targeted gene sequencing.</title>
        <authorList>
            <person name="Rim J.H."/>
            <person name="Kim S.H."/>
            <person name="Hwang I.S."/>
            <person name="Kwon S.S."/>
            <person name="Kim J."/>
            <person name="Kim H.W."/>
            <person name="Cho M.J."/>
            <person name="Ko A."/>
            <person name="Youn S.E."/>
            <person name="Kim J."/>
            <person name="Lee Y.M."/>
            <person name="Chung H.J."/>
            <person name="Lee J.S."/>
            <person name="Kim H.D."/>
            <person name="Choi J.R."/>
            <person name="Lee S.T."/>
            <person name="Kang H.C."/>
        </authorList>
    </citation>
    <scope>VARIANTS TRP-40 AND PRO-52</scope>
</reference>
<reference key="18">
    <citation type="journal article" date="2021" name="Cells">
        <title>Pediatric Encephalopathy: Clinical, Biochemical and Cellular Insights into the Role of Gln52 of GNAO1 and GNAI1 for the Dominant Disease.</title>
        <authorList>
            <person name="Solis G.P."/>
            <person name="Kozhanova T.V."/>
            <person name="Koval A."/>
            <person name="Zhilina S.S."/>
            <person name="Mescheryakova T.I."/>
            <person name="Abramov A.A."/>
            <person name="Ishmuratov E.V."/>
            <person name="Bolshakova E.S."/>
            <person name="Osipova K.V."/>
            <person name="Ayvazyan S.O."/>
            <person name="Lebon S."/>
            <person name="Kanivets I.V."/>
            <person name="Pyankov D.V."/>
            <person name="Troccaz S."/>
            <person name="Silachev D.N."/>
            <person name="Zavadenko N.N."/>
            <person name="Prityko A.G."/>
            <person name="Katanaev V.L."/>
        </authorList>
    </citation>
    <scope>VARIANT DEE17 ARG-52</scope>
    <scope>CHARACTERIZATION OF VARIANT DEE17 ARG-52</scope>
    <scope>CHARACTERIZATION OF VARIANT PRO-52</scope>
    <scope>INTERACTION WITH RGS19</scope>
    <scope>INTERACTION WITH GNB1 AND GNG3</scope>
    <scope>SUBCELLULAR LOCATION</scope>
</reference>
<name>GNAO_HUMAN</name>
<comment type="function">
    <text evidence="2 15 16">Guanine nucleotide-binding proteins (G proteins) function as transducers downstream of G protein-coupled receptors (GPCRs) in numerous signaling cascades (PubMed:29925951, PubMed:33408414). The alpha chain contains the guanine nucleotide binding site and alternates between an active, GTP-bound state and an inactive, GDP-bound state (By similarity). Signaling by an activated GPCR promotes GDP release and GTP binding (By similarity). The alpha subunit has a low GTPase activity that converts bound GTP to GDP, thereby terminating the signal (By similarity). Both GDP release and GTP hydrolysis are modulated by numerous regulatory proteins (By similarity). Signaling is mediated via effector proteins, such as adenylate cyclase (By similarity). Inhibits adenylate cyclase activity, leading to decreased intracellular cAMP levels (By similarity).</text>
</comment>
<comment type="catalytic activity">
    <reaction evidence="2">
        <text>GTP + H2O = GDP + phosphate + H(+)</text>
        <dbReference type="Rhea" id="RHEA:19669"/>
        <dbReference type="ChEBI" id="CHEBI:15377"/>
        <dbReference type="ChEBI" id="CHEBI:15378"/>
        <dbReference type="ChEBI" id="CHEBI:37565"/>
        <dbReference type="ChEBI" id="CHEBI:43474"/>
        <dbReference type="ChEBI" id="CHEBI:58189"/>
    </reaction>
    <physiologicalReaction direction="left-to-right" evidence="2">
        <dbReference type="Rhea" id="RHEA:19670"/>
    </physiologicalReaction>
</comment>
<comment type="activity regulation">
    <text evidence="2">The GTPase activity is promoted by GTPAse activators, such as RGS14, RGS16 and RGS19.</text>
</comment>
<comment type="subunit">
    <text evidence="2 15 16 17">G proteins are composed of 3 units; alpha, beta and gamma (PubMed:29925951, PubMed:34685729). The alpha chain contains the guanine nucleotide binding site (PubMed:29925951). Forms a complex with GNB1 and GNG3 (PubMed:34685729). Interacts with RGS14 (By similarity). Interacts with RGS16 (By similarity). Interacts with RGS19 (PubMed:34685729). Interacts (when palmitoylated) with ADGRG3 (PubMed:33408414).</text>
</comment>
<comment type="interaction">
    <interactant intactId="EBI-715087">
        <id>P09471</id>
    </interactant>
    <interactant intactId="EBI-25889034">
        <id>P28288-2</id>
        <label>ABCD3</label>
    </interactant>
    <organismsDiffer>false</organismsDiffer>
    <experiments>3</experiments>
</comment>
<comment type="interaction">
    <interactant intactId="EBI-715087">
        <id>P09471</id>
    </interactant>
    <interactant intactId="EBI-1049597">
        <id>P27797</id>
        <label>CALR</label>
    </interactant>
    <organismsDiffer>false</organismsDiffer>
    <experiments>3</experiments>
</comment>
<comment type="interaction">
    <interactant intactId="EBI-715087">
        <id>P09471</id>
    </interactant>
    <interactant intactId="EBI-78219">
        <id>P45973</id>
        <label>CBX5</label>
    </interactant>
    <organismsDiffer>false</organismsDiffer>
    <experiments>3</experiments>
</comment>
<comment type="interaction">
    <interactant intactId="EBI-715087">
        <id>P09471</id>
    </interactant>
    <interactant intactId="EBI-351007">
        <id>P36957</id>
        <label>DLST</label>
    </interactant>
    <organismsDiffer>false</organismsDiffer>
    <experiments>3</experiments>
</comment>
<comment type="interaction">
    <interactant intactId="EBI-715087">
        <id>P09471</id>
    </interactant>
    <interactant intactId="EBI-466029">
        <id>P42858</id>
        <label>HTT</label>
    </interactant>
    <organismsDiffer>false</organismsDiffer>
    <experiments>7</experiments>
</comment>
<comment type="interaction">
    <interactant intactId="EBI-715087">
        <id>P09471</id>
    </interactant>
    <interactant intactId="EBI-1055945">
        <id>Q8TDX7</id>
        <label>NEK7</label>
    </interactant>
    <organismsDiffer>false</organismsDiffer>
    <experiments>3</experiments>
</comment>
<comment type="interaction">
    <interactant intactId="EBI-715087">
        <id>P09471</id>
    </interactant>
    <interactant intactId="EBI-717509">
        <id>Q9NPQ8</id>
        <label>RIC8A</label>
    </interactant>
    <organismsDiffer>false</organismsDiffer>
    <experiments>2</experiments>
</comment>
<comment type="interaction">
    <interactant intactId="EBI-715087">
        <id>P09471</id>
    </interactant>
    <interactant intactId="EBI-1046616">
        <id>P51812</id>
        <label>RPS6KA3</label>
    </interactant>
    <organismsDiffer>false</organismsDiffer>
    <experiments>3</experiments>
</comment>
<comment type="interaction">
    <interactant intactId="EBI-715087">
        <id>P09471</id>
    </interactant>
    <interactant intactId="EBI-2682386">
        <id>Q96PV0</id>
        <label>SYNGAP1</label>
    </interactant>
    <organismsDiffer>false</organismsDiffer>
    <experiments>4</experiments>
</comment>
<comment type="interaction">
    <interactant intactId="EBI-715087">
        <id>P09471</id>
    </interactant>
    <interactant intactId="EBI-296151">
        <id>P37173</id>
        <label>TGFBR2</label>
    </interactant>
    <organismsDiffer>false</organismsDiffer>
    <experiments>3</experiments>
</comment>
<comment type="interaction">
    <interactant intactId="EBI-715087">
        <id>P09471</id>
    </interactant>
    <interactant intactId="EBI-355164">
        <id>P55072</id>
        <label>VCP</label>
    </interactant>
    <organismsDiffer>false</organismsDiffer>
    <experiments>3</experiments>
</comment>
<comment type="subcellular location">
    <subcellularLocation>
        <location evidence="17">Cell membrane</location>
    </subcellularLocation>
    <subcellularLocation>
        <location evidence="20">Membrane</location>
        <topology evidence="20">Lipid-anchor</topology>
    </subcellularLocation>
</comment>
<comment type="alternative products">
    <event type="alternative splicing"/>
    <isoform>
        <id>P09471-1</id>
        <name>Alpha-1</name>
        <sequence type="displayed"/>
    </isoform>
    <isoform>
        <id>P09471-2</id>
        <id>P29777-1</id>
        <name>Alpha-2</name>
        <sequence type="described" ref="VSP_031250"/>
    </isoform>
</comment>
<comment type="PTM">
    <text evidence="2">Histaminylated at Gln-205 residues by TGM2.</text>
</comment>
<comment type="PTM">
    <text evidence="16">Palmitoylated at Cys-351, leading to binding to ADGRG3.</text>
</comment>
<comment type="disease" evidence="4 6 8 10 12 17">
    <disease id="DI-03922">
        <name>Developmental and epileptic encephalopathy 17</name>
        <acronym>DEE17</acronym>
        <description>A severe neurologic disorder characterized by onset of intractable seizures in the first weeks or months of life and usually associated with EEG abnormalities. Affected infants have very poor psychomotor development and may have brain abnormalities, such as cerebral atrophy or thin corpus callosum. Some patients may show involuntary movements.</description>
        <dbReference type="MIM" id="615473"/>
    </disease>
    <text>The disease is caused by variants affecting the gene represented in this entry.</text>
</comment>
<comment type="disease" evidence="6 7 9 11 13">
    <disease id="DI-05010">
        <name>Neurodevelopmental disorder with involuntary movements</name>
        <acronym>NEDIM</acronym>
        <description>A neurodevelopmental disorder manifesting with a wide range of clinical symptoms. Clinical features range from severe motor and cognitive impairment with marked choreoathetosis, self-injurious behavior and epileptic encephalopathy, to a milder phenotype featuring moderate developmental delay associated with complex stereotypies, mainly facial dyskinesia, and mild epilepsy. Hyperkinetic movements are often exacerbated by specific triggers, such as illness, emotion and high ambient temperature. Some patients have brain abnormalities, such as cerebral atrophy or thin corpus callosum.</description>
        <dbReference type="MIM" id="617493"/>
    </disease>
    <text>The disease is caused by variants affecting the gene represented in this entry.</text>
</comment>
<comment type="similarity">
    <text>Belongs to the G-alpha family. G(i/o/t/z) subfamily.</text>
</comment>
<protein>
    <recommendedName>
        <fullName>Guanine nucleotide-binding protein G(o) subunit alpha</fullName>
        <ecNumber evidence="2">3.6.5.-</ecNumber>
    </recommendedName>
</protein>
<gene>
    <name type="primary">GNAO1</name>
</gene>
<accession>P09471</accession>
<accession>P29777</accession>
<accession>Q8TD72</accession>
<accession>Q9UMV4</accession>
<proteinExistence type="evidence at protein level"/>
<organism>
    <name type="scientific">Homo sapiens</name>
    <name type="common">Human</name>
    <dbReference type="NCBI Taxonomy" id="9606"/>
    <lineage>
        <taxon>Eukaryota</taxon>
        <taxon>Metazoa</taxon>
        <taxon>Chordata</taxon>
        <taxon>Craniata</taxon>
        <taxon>Vertebrata</taxon>
        <taxon>Euteleostomi</taxon>
        <taxon>Mammalia</taxon>
        <taxon>Eutheria</taxon>
        <taxon>Euarchontoglires</taxon>
        <taxon>Primates</taxon>
        <taxon>Haplorrhini</taxon>
        <taxon>Catarrhini</taxon>
        <taxon>Hominidae</taxon>
        <taxon>Homo</taxon>
    </lineage>
</organism>
<sequence>MGCTLSAEERAALERSKAIEKNLKEDGISAAKDVKLLLLGAGESGKSTIVKQMKIIHEDGFSGEDVKQYKPVVYSNTIQSLAAIVRAMDTLGIEYGDKERKADAKMVCDVVSRMEDTEPFSAELLSAMMRLWGDSGIQECFNRSREYQLNDSAKYYLDSLDRIGAADYQPTEQDILRTRVKTTGIVETHFTFKNLHFRLFDVGGQRSERKKWIHCFEDVTAIIFCVALSGYDQVLHEDETTNRMHESLMLFDSICNNKFFIDTSIILFLNKKDLFGEKIKKSPLTICFPEYTGPNTYEDAAAYIQAQFESKNRSPNKEIYCHMTCATDTNNIQVVFDAVTDIIIANNLRGCGLY</sequence>
<feature type="initiator methionine" description="Removed" evidence="5">
    <location>
        <position position="1"/>
    </location>
</feature>
<feature type="chain" id="PRO_0000203702" description="Guanine nucleotide-binding protein G(o) subunit alpha">
    <location>
        <begin position="2"/>
        <end position="354"/>
    </location>
</feature>
<feature type="domain" description="G-alpha" evidence="3">
    <location>
        <begin position="32"/>
        <end position="354"/>
    </location>
</feature>
<feature type="region of interest" description="G1 motif" evidence="3">
    <location>
        <begin position="35"/>
        <end position="48"/>
    </location>
</feature>
<feature type="region of interest" description="G2 motif" evidence="3">
    <location>
        <begin position="174"/>
        <end position="182"/>
    </location>
</feature>
<feature type="region of interest" description="G3 motif" evidence="3">
    <location>
        <begin position="197"/>
        <end position="206"/>
    </location>
</feature>
<feature type="region of interest" description="G4 motif" evidence="3">
    <location>
        <begin position="266"/>
        <end position="273"/>
    </location>
</feature>
<feature type="region of interest" description="G5 motif" evidence="3">
    <location>
        <begin position="324"/>
        <end position="329"/>
    </location>
</feature>
<feature type="binding site" evidence="2">
    <location>
        <position position="43"/>
    </location>
    <ligand>
        <name>GTP</name>
        <dbReference type="ChEBI" id="CHEBI:37565"/>
    </ligand>
</feature>
<feature type="binding site" evidence="2">
    <location>
        <position position="46"/>
    </location>
    <ligand>
        <name>GTP</name>
        <dbReference type="ChEBI" id="CHEBI:37565"/>
    </ligand>
</feature>
<feature type="binding site" evidence="2">
    <location>
        <position position="47"/>
    </location>
    <ligand>
        <name>GTP</name>
        <dbReference type="ChEBI" id="CHEBI:37565"/>
    </ligand>
</feature>
<feature type="binding site" evidence="2">
    <location>
        <position position="47"/>
    </location>
    <ligand>
        <name>Mg(2+)</name>
        <dbReference type="ChEBI" id="CHEBI:18420"/>
    </ligand>
</feature>
<feature type="binding site" evidence="2">
    <location>
        <position position="48"/>
    </location>
    <ligand>
        <name>GTP</name>
        <dbReference type="ChEBI" id="CHEBI:37565"/>
    </ligand>
</feature>
<feature type="binding site" evidence="2">
    <location>
        <position position="152"/>
    </location>
    <ligand>
        <name>GTP</name>
        <dbReference type="ChEBI" id="CHEBI:37565"/>
    </ligand>
</feature>
<feature type="binding site" evidence="2">
    <location>
        <position position="176"/>
    </location>
    <ligand>
        <name>GTP</name>
        <dbReference type="ChEBI" id="CHEBI:37565"/>
    </ligand>
</feature>
<feature type="binding site" evidence="2">
    <location>
        <position position="177"/>
    </location>
    <ligand>
        <name>GTP</name>
        <dbReference type="ChEBI" id="CHEBI:37565"/>
    </ligand>
</feature>
<feature type="binding site" evidence="2">
    <location>
        <position position="178"/>
    </location>
    <ligand>
        <name>GTP</name>
        <dbReference type="ChEBI" id="CHEBI:37565"/>
    </ligand>
</feature>
<feature type="binding site" evidence="2">
    <location>
        <position position="179"/>
    </location>
    <ligand>
        <name>GTP</name>
        <dbReference type="ChEBI" id="CHEBI:37565"/>
    </ligand>
</feature>
<feature type="binding site" evidence="2">
    <location>
        <position position="182"/>
    </location>
    <ligand>
        <name>Mg(2+)</name>
        <dbReference type="ChEBI" id="CHEBI:18420"/>
    </ligand>
</feature>
<feature type="binding site" evidence="2">
    <location>
        <position position="270"/>
    </location>
    <ligand>
        <name>GTP</name>
        <dbReference type="ChEBI" id="CHEBI:37565"/>
    </ligand>
</feature>
<feature type="binding site" evidence="2">
    <location>
        <position position="273"/>
    </location>
    <ligand>
        <name>GTP</name>
        <dbReference type="ChEBI" id="CHEBI:37565"/>
    </ligand>
</feature>
<feature type="binding site" evidence="2">
    <location>
        <position position="325"/>
    </location>
    <ligand>
        <name>GTP</name>
        <dbReference type="ChEBI" id="CHEBI:37565"/>
    </ligand>
</feature>
<feature type="modified residue" description="ADP-ribosylarginine; by cholera toxin" evidence="1">
    <location>
        <position position="179"/>
    </location>
</feature>
<feature type="modified residue" description="5-glutamyl histamine" evidence="2">
    <location>
        <position position="205"/>
    </location>
</feature>
<feature type="modified residue" description="ADP-ribosylcysteine; by pertussis toxin" evidence="1">
    <location>
        <position position="351"/>
    </location>
</feature>
<feature type="lipid moiety-binding region" description="N-myristoyl glycine" evidence="5">
    <location>
        <position position="2"/>
    </location>
</feature>
<feature type="lipid moiety-binding region" description="S-palmitoyl cysteine" evidence="1">
    <location>
        <position position="3"/>
    </location>
</feature>
<feature type="lipid moiety-binding region" description="S-palmitoyl cysteine" evidence="16">
    <location>
        <position position="351"/>
    </location>
</feature>
<feature type="splice variant" id="VSP_031250" description="In isoform Alpha-2." evidence="18 19">
    <original>MLFDSICNNKFFIDTSIILFLNKKDLFGEKIKKSPLTICFPEYTGPNTYEDAAAYIQAQFESKNRSPNKEIYCHMTCATDTNNIQVVFDAVTDIIIANNLRGCGLY</original>
    <variation>KLFDSICNNKWFTDTSIILFLNKKDIFEEKIKKSPLTICFPEYTGPSAFTEAVAYIQAQYESKNKSAHKEIYTHVTCATDTNNIQFVFDAVTDVIIAKNLRGCGLY</variation>
    <location>
        <begin position="249"/>
        <end position="354"/>
    </location>
</feature>
<feature type="sequence variant" id="VAR_075416" description="In DEE17 and NEDIM; dbSNP:rs886041715." evidence="8 13">
    <original>G</original>
    <variation>R</variation>
    <location>
        <position position="40"/>
    </location>
</feature>
<feature type="sequence variant" id="VAR_087220" description="Found in a patient with intractable early-onset epilepsy; likely pathogenic." evidence="14">
    <original>G</original>
    <variation>W</variation>
    <location>
        <position position="40"/>
    </location>
</feature>
<feature type="sequence variant" id="VAR_079278" description="In NEDIM." evidence="13">
    <original>S</original>
    <variation>G</variation>
    <location>
        <position position="47"/>
    </location>
</feature>
<feature type="sequence variant" id="VAR_087221" description="Found in a patient with intractable early-onset epilepsy; likely pathogenic; loss of GTP binding; decreased interaction with RGS19; decreased interaction with heterodimers formed by GNB1 and GNG3; strongly decreased localization to cell membrane." evidence="14 17">
    <original>Q</original>
    <variation>P</variation>
    <location>
        <position position="52"/>
    </location>
</feature>
<feature type="sequence variant" id="VAR_087222" description="In DEE17; loss of GTP binding; decreased interaction with RGS19; decreased interaction with heterodimers formed by GNB1 and GNG3; strongly decreased localization to cell membrane." evidence="17">
    <original>Q</original>
    <variation>R</variation>
    <location>
        <position position="52"/>
    </location>
</feature>
<feature type="sequence variant" id="VAR_079279" description="In NEDIM." evidence="13">
    <original>I</original>
    <variation>T</variation>
    <location>
        <position position="56"/>
    </location>
</feature>
<feature type="sequence variant" id="VAR_070864" description="In DEE17; somatic mosaic mutation; the mutant protein has some abnormal cytoplasmic localization; dbSNP:rs587777055." evidence="4">
    <original>D</original>
    <variation>G</variation>
    <location>
        <position position="174"/>
    </location>
</feature>
<feature type="sequence variant" id="VAR_070865" description="In DEE17; the mutant protein accumulates in the cytoplasmic compartment; increased basal calcium-current density compared to wild-type." evidence="4">
    <location>
        <begin position="191"/>
        <end position="197"/>
    </location>
</feature>
<feature type="sequence variant" id="VAR_070866" description="In DEE17; the mutant protein localizes normally to the cell periphery; dbSNP:rs587777057." evidence="4 6">
    <original>G</original>
    <variation>R</variation>
    <location>
        <position position="203"/>
    </location>
</feature>
<feature type="sequence variant" id="VAR_077337" description="In DEE17 and NEDIM; dbSNP:rs886039494." evidence="6 12 13">
    <original>R</original>
    <variation>C</variation>
    <location>
        <position position="209"/>
    </location>
</feature>
<feature type="sequence variant" id="VAR_079280" description="In NEDIM; dbSNP:rs886039494." evidence="9">
    <original>R</original>
    <variation>G</variation>
    <location>
        <position position="209"/>
    </location>
</feature>
<feature type="sequence variant" id="VAR_079281" description="In NEDIM; dbSNP:rs797044878." evidence="7 9 11">
    <original>R</original>
    <variation>H</variation>
    <location>
        <position position="209"/>
    </location>
</feature>
<feature type="sequence variant" id="VAR_079282" description="In NEDIM." evidence="11">
    <original>R</original>
    <variation>L</variation>
    <location>
        <position position="209"/>
    </location>
</feature>
<feature type="sequence variant" id="VAR_077338" description="In NEDIM; dbSNP:rs797045599." evidence="6">
    <original>A</original>
    <variation>V</variation>
    <location>
        <position position="227"/>
    </location>
</feature>
<feature type="sequence variant" id="VAR_079283" description="In NEDIM; dbSNP:rs1114167431." evidence="13">
    <original>E</original>
    <variation>G</variation>
    <location>
        <position position="246"/>
    </location>
</feature>
<feature type="sequence variant" id="VAR_077339" description="In NEDIM; dbSNP:rs797044951." evidence="6 9">
    <original>E</original>
    <variation>K</variation>
    <location>
        <position position="246"/>
    </location>
</feature>
<feature type="sequence variant" id="VAR_070867" description="In DEE17; the mutant protein has some abnormal cytoplasmic localization; dbSNP:rs587777054." evidence="4 10">
    <original>I</original>
    <variation>N</variation>
    <location>
        <position position="279"/>
    </location>
</feature>
<feature type="mutagenesis site" description="Strong loss of binding to ADGRG3." evidence="16">
    <original>C</original>
    <variation>A</variation>
    <location>
        <position position="351"/>
    </location>
</feature>
<feature type="sequence conflict" description="In Ref. 2; AAA52584." evidence="20" ref="2">
    <original>S</original>
    <variation>G</variation>
    <location>
        <position position="16"/>
    </location>
</feature>
<feature type="sequence conflict" description="In Ref. 2; AAA52584." evidence="20" ref="2">
    <original>T</original>
    <variation>L</variation>
    <location>
        <position position="171"/>
    </location>
</feature>
<feature type="sequence conflict" description="In Ref. 2; AAA52584." evidence="20" ref="2">
    <original>D</original>
    <variation>E</variation>
    <location>
        <position position="218"/>
    </location>
</feature>
<feature type="helix" evidence="29">
    <location>
        <begin position="7"/>
        <end position="31"/>
    </location>
</feature>
<feature type="strand" evidence="29">
    <location>
        <begin position="34"/>
        <end position="45"/>
    </location>
</feature>
<feature type="helix" evidence="29">
    <location>
        <begin position="46"/>
        <end position="48"/>
    </location>
</feature>
<feature type="strand" evidence="25">
    <location>
        <begin position="49"/>
        <end position="51"/>
    </location>
</feature>
<feature type="helix" evidence="32">
    <location>
        <begin position="64"/>
        <end position="68"/>
    </location>
</feature>
<feature type="helix" evidence="32">
    <location>
        <begin position="70"/>
        <end position="91"/>
    </location>
</feature>
<feature type="helix" evidence="32">
    <location>
        <begin position="99"/>
        <end position="112"/>
    </location>
</feature>
<feature type="helix" evidence="32">
    <location>
        <begin position="122"/>
        <end position="132"/>
    </location>
</feature>
<feature type="helix" evidence="32">
    <location>
        <begin position="135"/>
        <end position="142"/>
    </location>
</feature>
<feature type="turn" evidence="32">
    <location>
        <begin position="143"/>
        <end position="146"/>
    </location>
</feature>
<feature type="helix" evidence="32">
    <location>
        <begin position="151"/>
        <end position="158"/>
    </location>
</feature>
<feature type="helix" evidence="32">
    <location>
        <begin position="160"/>
        <end position="165"/>
    </location>
</feature>
<feature type="turn" evidence="32">
    <location>
        <begin position="180"/>
        <end position="182"/>
    </location>
</feature>
<feature type="strand" evidence="29">
    <location>
        <begin position="186"/>
        <end position="194"/>
    </location>
</feature>
<feature type="strand" evidence="29">
    <location>
        <begin position="196"/>
        <end position="201"/>
    </location>
</feature>
<feature type="helix" evidence="30">
    <location>
        <begin position="202"/>
        <end position="204"/>
    </location>
</feature>
<feature type="helix" evidence="29">
    <location>
        <begin position="209"/>
        <end position="211"/>
    </location>
</feature>
<feature type="helix" evidence="29">
    <location>
        <begin position="213"/>
        <end position="216"/>
    </location>
</feature>
<feature type="strand" evidence="29">
    <location>
        <begin position="220"/>
        <end position="229"/>
    </location>
</feature>
<feature type="strand" evidence="27">
    <location>
        <begin position="231"/>
        <end position="233"/>
    </location>
</feature>
<feature type="turn" evidence="31">
    <location>
        <begin position="236"/>
        <end position="238"/>
    </location>
</feature>
<feature type="helix" evidence="29">
    <location>
        <begin position="242"/>
        <end position="255"/>
    </location>
</feature>
<feature type="strand" evidence="29">
    <location>
        <begin position="258"/>
        <end position="262"/>
    </location>
</feature>
<feature type="strand" evidence="29">
    <location>
        <begin position="264"/>
        <end position="270"/>
    </location>
</feature>
<feature type="helix" evidence="29">
    <location>
        <begin position="272"/>
        <end position="281"/>
    </location>
</feature>
<feature type="turn" evidence="28">
    <location>
        <begin position="284"/>
        <end position="287"/>
    </location>
</feature>
<feature type="strand" evidence="24">
    <location>
        <begin position="294"/>
        <end position="296"/>
    </location>
</feature>
<feature type="helix" evidence="29">
    <location>
        <begin position="297"/>
        <end position="310"/>
    </location>
</feature>
<feature type="strand" evidence="25">
    <location>
        <begin position="314"/>
        <end position="316"/>
    </location>
</feature>
<feature type="strand" evidence="29">
    <location>
        <begin position="320"/>
        <end position="323"/>
    </location>
</feature>
<feature type="strand" evidence="26">
    <location>
        <begin position="326"/>
        <end position="328"/>
    </location>
</feature>
<feature type="helix" evidence="29">
    <location>
        <begin position="332"/>
        <end position="350"/>
    </location>
</feature>
<keyword id="KW-0002">3D-structure</keyword>
<keyword id="KW-0013">ADP-ribosylation</keyword>
<keyword id="KW-0025">Alternative splicing</keyword>
<keyword id="KW-1003">Cell membrane</keyword>
<keyword id="KW-0225">Disease variant</keyword>
<keyword id="KW-0887">Epilepsy</keyword>
<keyword id="KW-0342">GTP-binding</keyword>
<keyword id="KW-0378">Hydrolase</keyword>
<keyword id="KW-0449">Lipoprotein</keyword>
<keyword id="KW-0460">Magnesium</keyword>
<keyword id="KW-0472">Membrane</keyword>
<keyword id="KW-0479">Metal-binding</keyword>
<keyword id="KW-0519">Myristate</keyword>
<keyword id="KW-0547">Nucleotide-binding</keyword>
<keyword id="KW-0564">Palmitate</keyword>
<keyword id="KW-1267">Proteomics identification</keyword>
<keyword id="KW-1185">Reference proteome</keyword>
<keyword id="KW-0807">Transducer</keyword>